<gene>
    <name evidence="2" type="primary">glnA</name>
    <name type="ordered locus">VNG_2093G</name>
</gene>
<keyword id="KW-0067">ATP-binding</keyword>
<keyword id="KW-0963">Cytoplasm</keyword>
<keyword id="KW-0436">Ligase</keyword>
<keyword id="KW-0460">Magnesium</keyword>
<keyword id="KW-0479">Metal-binding</keyword>
<keyword id="KW-0547">Nucleotide-binding</keyword>
<keyword id="KW-0597">Phosphoprotein</keyword>
<keyword id="KW-1185">Reference proteome</keyword>
<evidence type="ECO:0000250" key="1">
    <source>
        <dbReference type="UniProtKB" id="P0A1P6"/>
    </source>
</evidence>
<evidence type="ECO:0000250" key="2">
    <source>
        <dbReference type="UniProtKB" id="P12425"/>
    </source>
</evidence>
<evidence type="ECO:0000250" key="3">
    <source>
        <dbReference type="UniProtKB" id="P77961"/>
    </source>
</evidence>
<evidence type="ECO:0000250" key="4">
    <source>
        <dbReference type="UniProtKB" id="P9WN39"/>
    </source>
</evidence>
<evidence type="ECO:0000255" key="5">
    <source>
        <dbReference type="PROSITE-ProRule" id="PRU01330"/>
    </source>
</evidence>
<evidence type="ECO:0000255" key="6">
    <source>
        <dbReference type="PROSITE-ProRule" id="PRU01331"/>
    </source>
</evidence>
<evidence type="ECO:0000305" key="7"/>
<sequence>MTNGDSSSSALTDNERAVLDDIEAQGIDFLRLQFTDILGTVKNVSIPAHQAEKAFTEGIYFDGSSIEGFVRIQESDMRLDPDPETFAVLPWRSNGDGGSARLICDVVDREGNAFAGGPRQVLKNVLARADDMGYSVSIGPEPEFFLFEKDDDGNATTTAHDQGGYFDLAPKDLASDIRREIIFTLEAMGFEIEASHHEVARGQHEINFKYDDALTTADNIATFRAVVRAVAEQHDVHATFMPKPIGEINGSGMHSHISLFDEDGENVFADNDDEFNLSETAYQFMGGVLEHAPAFTAVTNPTVNSYKRLVPGYEAPVYIAWSGVNRSALIRVPDAAGVSARFEIRSPDPSCNPYLALAAVIAAGLDGIDTDADPGDAVREDIYEFDEDKRDAYGIDTLPGHLGDAVTALESDPVMQDALGEHVCEKFAEAKRHEYAEYKASVSEWETDRYLEKF</sequence>
<reference key="1">
    <citation type="journal article" date="2000" name="Proc. Natl. Acad. Sci. U.S.A.">
        <title>Genome sequence of Halobacterium species NRC-1.</title>
        <authorList>
            <person name="Ng W.V."/>
            <person name="Kennedy S.P."/>
            <person name="Mahairas G.G."/>
            <person name="Berquist B."/>
            <person name="Pan M."/>
            <person name="Shukla H.D."/>
            <person name="Lasky S.R."/>
            <person name="Baliga N.S."/>
            <person name="Thorsson V."/>
            <person name="Sbrogna J."/>
            <person name="Swartzell S."/>
            <person name="Weir D."/>
            <person name="Hall J."/>
            <person name="Dahl T.A."/>
            <person name="Welti R."/>
            <person name="Goo Y.A."/>
            <person name="Leithauser B."/>
            <person name="Keller K."/>
            <person name="Cruz R."/>
            <person name="Danson M.J."/>
            <person name="Hough D.W."/>
            <person name="Maddocks D.G."/>
            <person name="Jablonski P.E."/>
            <person name="Krebs M.P."/>
            <person name="Angevine C.M."/>
            <person name="Dale H."/>
            <person name="Isenbarger T.A."/>
            <person name="Peck R.F."/>
            <person name="Pohlschroder M."/>
            <person name="Spudich J.L."/>
            <person name="Jung K.-H."/>
            <person name="Alam M."/>
            <person name="Freitas T."/>
            <person name="Hou S."/>
            <person name="Daniels C.J."/>
            <person name="Dennis P.P."/>
            <person name="Omer A.D."/>
            <person name="Ebhardt H."/>
            <person name="Lowe T.M."/>
            <person name="Liang P."/>
            <person name="Riley M."/>
            <person name="Hood L."/>
            <person name="DasSarma S."/>
        </authorList>
    </citation>
    <scope>NUCLEOTIDE SEQUENCE [LARGE SCALE GENOMIC DNA]</scope>
    <source>
        <strain>ATCC 700922 / JCM 11081 / NRC-1</strain>
    </source>
</reference>
<protein>
    <recommendedName>
        <fullName evidence="2">Glutamine synthetase</fullName>
        <shortName evidence="2">GS</shortName>
        <ecNumber evidence="2">6.3.1.2</ecNumber>
    </recommendedName>
    <alternativeName>
        <fullName evidence="2">Glutamate--ammonia ligase</fullName>
    </alternativeName>
    <alternativeName>
        <fullName evidence="2">Glutamine synthetase I alpha</fullName>
        <shortName evidence="2">GSI alpha</shortName>
    </alternativeName>
</protein>
<dbReference type="EC" id="6.3.1.2" evidence="2"/>
<dbReference type="EMBL" id="AE004437">
    <property type="protein sequence ID" value="AAG20238.1"/>
    <property type="molecule type" value="Genomic_DNA"/>
</dbReference>
<dbReference type="PIR" id="B84359">
    <property type="entry name" value="B84359"/>
</dbReference>
<dbReference type="RefSeq" id="WP_010903540.1">
    <property type="nucleotide sequence ID" value="NC_002607.1"/>
</dbReference>
<dbReference type="SMR" id="Q9HNI2"/>
<dbReference type="FunCoup" id="Q9HNI2">
    <property type="interactions" value="66"/>
</dbReference>
<dbReference type="STRING" id="64091.VNG_2093G"/>
<dbReference type="PaxDb" id="64091-VNG_2093G"/>
<dbReference type="GeneID" id="68694667"/>
<dbReference type="KEGG" id="hal:VNG_2093G"/>
<dbReference type="PATRIC" id="fig|64091.14.peg.1598"/>
<dbReference type="HOGENOM" id="CLU_017290_1_3_2"/>
<dbReference type="InParanoid" id="Q9HNI2"/>
<dbReference type="OrthoDB" id="36124at2157"/>
<dbReference type="PhylomeDB" id="Q9HNI2"/>
<dbReference type="Proteomes" id="UP000000554">
    <property type="component" value="Chromosome"/>
</dbReference>
<dbReference type="GO" id="GO:0005737">
    <property type="term" value="C:cytoplasm"/>
    <property type="evidence" value="ECO:0007669"/>
    <property type="project" value="UniProtKB-SubCell"/>
</dbReference>
<dbReference type="GO" id="GO:0005524">
    <property type="term" value="F:ATP binding"/>
    <property type="evidence" value="ECO:0007669"/>
    <property type="project" value="UniProtKB-KW"/>
</dbReference>
<dbReference type="GO" id="GO:0004356">
    <property type="term" value="F:glutamine synthetase activity"/>
    <property type="evidence" value="ECO:0007669"/>
    <property type="project" value="UniProtKB-EC"/>
</dbReference>
<dbReference type="GO" id="GO:0046872">
    <property type="term" value="F:metal ion binding"/>
    <property type="evidence" value="ECO:0007669"/>
    <property type="project" value="UniProtKB-KW"/>
</dbReference>
<dbReference type="GO" id="GO:0006542">
    <property type="term" value="P:glutamine biosynthetic process"/>
    <property type="evidence" value="ECO:0007669"/>
    <property type="project" value="InterPro"/>
</dbReference>
<dbReference type="FunFam" id="3.30.590.10:FF:000003">
    <property type="entry name" value="Glutamine synthetase 2"/>
    <property type="match status" value="1"/>
</dbReference>
<dbReference type="Gene3D" id="3.10.20.70">
    <property type="entry name" value="Glutamine synthetase, N-terminal domain"/>
    <property type="match status" value="1"/>
</dbReference>
<dbReference type="Gene3D" id="3.30.590.10">
    <property type="entry name" value="Glutamine synthetase/guanido kinase, catalytic domain"/>
    <property type="match status" value="1"/>
</dbReference>
<dbReference type="InterPro" id="IPR008147">
    <property type="entry name" value="Gln_synt_N"/>
</dbReference>
<dbReference type="InterPro" id="IPR036651">
    <property type="entry name" value="Gln_synt_N_sf"/>
</dbReference>
<dbReference type="InterPro" id="IPR014746">
    <property type="entry name" value="Gln_synth/guanido_kin_cat_dom"/>
</dbReference>
<dbReference type="InterPro" id="IPR008146">
    <property type="entry name" value="Gln_synth_cat_dom"/>
</dbReference>
<dbReference type="InterPro" id="IPR027303">
    <property type="entry name" value="Gln_synth_gly_rich_site"/>
</dbReference>
<dbReference type="InterPro" id="IPR004809">
    <property type="entry name" value="Gln_synth_I"/>
</dbReference>
<dbReference type="InterPro" id="IPR027302">
    <property type="entry name" value="Gln_synth_N_conserv_site"/>
</dbReference>
<dbReference type="NCBIfam" id="TIGR00653">
    <property type="entry name" value="GlnA"/>
    <property type="match status" value="1"/>
</dbReference>
<dbReference type="PANTHER" id="PTHR43785">
    <property type="entry name" value="GAMMA-GLUTAMYLPUTRESCINE SYNTHETASE"/>
    <property type="match status" value="1"/>
</dbReference>
<dbReference type="PANTHER" id="PTHR43785:SF12">
    <property type="entry name" value="TYPE-1 GLUTAMINE SYNTHETASE 2"/>
    <property type="match status" value="1"/>
</dbReference>
<dbReference type="Pfam" id="PF00120">
    <property type="entry name" value="Gln-synt_C"/>
    <property type="match status" value="1"/>
</dbReference>
<dbReference type="Pfam" id="PF03951">
    <property type="entry name" value="Gln-synt_N"/>
    <property type="match status" value="1"/>
</dbReference>
<dbReference type="SMART" id="SM01230">
    <property type="entry name" value="Gln-synt_C"/>
    <property type="match status" value="1"/>
</dbReference>
<dbReference type="SUPFAM" id="SSF54368">
    <property type="entry name" value="Glutamine synthetase, N-terminal domain"/>
    <property type="match status" value="1"/>
</dbReference>
<dbReference type="SUPFAM" id="SSF55931">
    <property type="entry name" value="Glutamine synthetase/guanido kinase"/>
    <property type="match status" value="1"/>
</dbReference>
<dbReference type="PROSITE" id="PS00180">
    <property type="entry name" value="GLNA_1"/>
    <property type="match status" value="1"/>
</dbReference>
<dbReference type="PROSITE" id="PS00181">
    <property type="entry name" value="GLNA_ATP"/>
    <property type="match status" value="1"/>
</dbReference>
<dbReference type="PROSITE" id="PS51986">
    <property type="entry name" value="GS_BETA_GRASP"/>
    <property type="match status" value="1"/>
</dbReference>
<dbReference type="PROSITE" id="PS51987">
    <property type="entry name" value="GS_CATALYTIC"/>
    <property type="match status" value="1"/>
</dbReference>
<name>GLNA_HALSA</name>
<organism>
    <name type="scientific">Halobacterium salinarum (strain ATCC 700922 / JCM 11081 / NRC-1)</name>
    <name type="common">Halobacterium halobium</name>
    <dbReference type="NCBI Taxonomy" id="64091"/>
    <lineage>
        <taxon>Archaea</taxon>
        <taxon>Methanobacteriati</taxon>
        <taxon>Methanobacteriota</taxon>
        <taxon>Stenosarchaea group</taxon>
        <taxon>Halobacteria</taxon>
        <taxon>Halobacteriales</taxon>
        <taxon>Halobacteriaceae</taxon>
        <taxon>Halobacterium</taxon>
        <taxon>Halobacterium salinarum NRC-34001</taxon>
    </lineage>
</organism>
<comment type="function">
    <text evidence="2">Glutamine synthetase (GS) is an unusual multitasking protein that functions as an enzyme, a transcription coregulator, and a chaperone in ammonium assimilation and in the regulation of genes involved in nitrogen metabolism. It catalyzes the ATP-dependent biosynthesis of glutamine from glutamate and ammonia. Feedback-inhibited GlnA also interacts with and regulates the activity of the transcriptional regulator TnrA. During nitrogen limitation, TnrA is in its DNA-binding active state and turns on the transcription of genes required for nitrogen assimilation. Under conditions of nitrogen excess, feedback-inhibited GlnA forms a stable complex with TnrA, which inhibits its DNA-binding activity. In contrast, feedback-inhibited GlnA acts as a chaperone to stabilize the DNA-binding activity of GlnR, which represses the transcription of nitrogen assimilation genes.</text>
</comment>
<comment type="catalytic activity">
    <reaction evidence="2">
        <text>L-glutamate + NH4(+) + ATP = L-glutamine + ADP + phosphate + H(+)</text>
        <dbReference type="Rhea" id="RHEA:16169"/>
        <dbReference type="ChEBI" id="CHEBI:15378"/>
        <dbReference type="ChEBI" id="CHEBI:28938"/>
        <dbReference type="ChEBI" id="CHEBI:29985"/>
        <dbReference type="ChEBI" id="CHEBI:30616"/>
        <dbReference type="ChEBI" id="CHEBI:43474"/>
        <dbReference type="ChEBI" id="CHEBI:58359"/>
        <dbReference type="ChEBI" id="CHEBI:456216"/>
        <dbReference type="EC" id="6.3.1.2"/>
    </reaction>
</comment>
<comment type="cofactor">
    <cofactor evidence="2">
        <name>Mg(2+)</name>
        <dbReference type="ChEBI" id="CHEBI:18420"/>
    </cofactor>
    <text evidence="2">Binds 2 Mg(2+) ions per subunit.</text>
</comment>
<comment type="activity regulation">
    <text evidence="2">Inhibited by glutamine.</text>
</comment>
<comment type="subunit">
    <text evidence="2">Oligomer of 12 subunits arranged in the form of two hexagons. In its feedback-inhibited form, interacts with TnrA in order to block its DNA-binding activity.</text>
</comment>
<comment type="subcellular location">
    <subcellularLocation>
        <location evidence="2">Cytoplasm</location>
    </subcellularLocation>
</comment>
<comment type="similarity">
    <text evidence="7">Belongs to the glutamine synthetase family.</text>
</comment>
<accession>Q9HNI2</accession>
<proteinExistence type="inferred from homology"/>
<feature type="chain" id="PRO_0000153202" description="Glutamine synthetase">
    <location>
        <begin position="1"/>
        <end position="454"/>
    </location>
</feature>
<feature type="domain" description="GS beta-grasp" evidence="5">
    <location>
        <begin position="25"/>
        <end position="111"/>
    </location>
</feature>
<feature type="domain" description="GS catalytic" evidence="6">
    <location>
        <begin position="118"/>
        <end position="454"/>
    </location>
</feature>
<feature type="binding site" evidence="2">
    <location>
        <position position="141"/>
    </location>
    <ligand>
        <name>Mg(2+)</name>
        <dbReference type="ChEBI" id="CHEBI:18420"/>
        <label>1</label>
    </ligand>
</feature>
<feature type="binding site" evidence="2">
    <location>
        <position position="143"/>
    </location>
    <ligand>
        <name>Mg(2+)</name>
        <dbReference type="ChEBI" id="CHEBI:18420"/>
        <label>2</label>
    </ligand>
</feature>
<feature type="binding site" evidence="4">
    <location>
        <position position="193"/>
    </location>
    <ligand>
        <name>ATP</name>
        <dbReference type="ChEBI" id="CHEBI:30616"/>
    </ligand>
</feature>
<feature type="binding site" evidence="2">
    <location>
        <position position="198"/>
    </location>
    <ligand>
        <name>Mg(2+)</name>
        <dbReference type="ChEBI" id="CHEBI:18420"/>
        <label>2</label>
    </ligand>
</feature>
<feature type="binding site" evidence="2">
    <location>
        <position position="205"/>
    </location>
    <ligand>
        <name>Mg(2+)</name>
        <dbReference type="ChEBI" id="CHEBI:18420"/>
        <label>2</label>
    </ligand>
</feature>
<feature type="binding site" evidence="4">
    <location>
        <begin position="249"/>
        <end position="250"/>
    </location>
    <ligand>
        <name>L-glutamate</name>
        <dbReference type="ChEBI" id="CHEBI:29985"/>
    </ligand>
</feature>
<feature type="binding site" evidence="2">
    <location>
        <position position="250"/>
    </location>
    <ligand>
        <name>L-glutamate</name>
        <dbReference type="ChEBI" id="CHEBI:29985"/>
    </ligand>
</feature>
<feature type="binding site" evidence="2">
    <location>
        <position position="254"/>
    </location>
    <ligand>
        <name>Mg(2+)</name>
        <dbReference type="ChEBI" id="CHEBI:18420"/>
        <label>1</label>
    </ligand>
</feature>
<feature type="binding site" evidence="4">
    <location>
        <begin position="256"/>
        <end position="258"/>
    </location>
    <ligand>
        <name>ATP</name>
        <dbReference type="ChEBI" id="CHEBI:30616"/>
    </ligand>
</feature>
<feature type="binding site" evidence="3">
    <location>
        <position position="258"/>
    </location>
    <ligand>
        <name>ATP</name>
        <dbReference type="ChEBI" id="CHEBI:30616"/>
    </ligand>
</feature>
<feature type="binding site" evidence="1">
    <location>
        <position position="308"/>
    </location>
    <ligand>
        <name>L-glutamate</name>
        <dbReference type="ChEBI" id="CHEBI:29985"/>
    </ligand>
</feature>
<feature type="binding site" evidence="1">
    <location>
        <position position="314"/>
    </location>
    <ligand>
        <name>L-glutamate</name>
        <dbReference type="ChEBI" id="CHEBI:29985"/>
    </ligand>
</feature>
<feature type="binding site" evidence="4">
    <location>
        <position position="326"/>
    </location>
    <ligand>
        <name>ATP</name>
        <dbReference type="ChEBI" id="CHEBI:30616"/>
    </ligand>
</feature>
<feature type="binding site" evidence="4">
    <location>
        <position position="326"/>
    </location>
    <ligand>
        <name>L-glutamate</name>
        <dbReference type="ChEBI" id="CHEBI:29985"/>
    </ligand>
</feature>
<feature type="binding site" evidence="4">
    <location>
        <position position="331"/>
    </location>
    <ligand>
        <name>ATP</name>
        <dbReference type="ChEBI" id="CHEBI:30616"/>
    </ligand>
</feature>
<feature type="binding site" evidence="2">
    <location>
        <position position="343"/>
    </location>
    <ligand>
        <name>Mg(2+)</name>
        <dbReference type="ChEBI" id="CHEBI:18420"/>
        <label>1</label>
    </ligand>
</feature>
<feature type="binding site" evidence="1">
    <location>
        <position position="345"/>
    </location>
    <ligand>
        <name>L-glutamate</name>
        <dbReference type="ChEBI" id="CHEBI:29985"/>
    </ligand>
</feature>
<feature type="site" description="Important for inhibition by glutamine" evidence="2">
    <location>
        <position position="71"/>
    </location>
</feature>